<sequence>MNILFSKRLGILTIGSLLVLAGCQTSGSSAGESNQTTSSSAVEEDSSKTQEQTSDSHTHEHSHDHSHAHDEETEKIYEGYFKNSQVKDRLLSDWEGDWQSVYPYLQDGTLDEVFSYKSEHEGGKTAEEYKEYYKKGYQTDVDRIVIQKDTVTFFKNGKEYSGKYTYDGYEILTYDAGNRGVRYIFKLAKKAEGLPQYIQFSDHSIYPTKASHYHLYWGDDREALLDEVKNWPTYYPSKMDGHDIAHEMMAH</sequence>
<keyword id="KW-0479">Metal-binding</keyword>
<keyword id="KW-1185">Reference proteome</keyword>
<keyword id="KW-0732">Signal</keyword>
<keyword id="KW-0862">Zinc</keyword>
<gene>
    <name type="primary">yrpE</name>
    <name type="ordered locus">BSU26830</name>
</gene>
<accession>O05410</accession>
<dbReference type="EMBL" id="U93875">
    <property type="protein sequence ID" value="AAB80888.1"/>
    <property type="molecule type" value="Genomic_DNA"/>
</dbReference>
<dbReference type="EMBL" id="AL009126">
    <property type="protein sequence ID" value="CAB14624.1"/>
    <property type="molecule type" value="Genomic_DNA"/>
</dbReference>
<dbReference type="PIR" id="E69978">
    <property type="entry name" value="E69978"/>
</dbReference>
<dbReference type="RefSeq" id="WP_003229858.1">
    <property type="nucleotide sequence ID" value="NZ_OZ025638.1"/>
</dbReference>
<dbReference type="SMR" id="O05410"/>
<dbReference type="FunCoup" id="O05410">
    <property type="interactions" value="138"/>
</dbReference>
<dbReference type="STRING" id="224308.BSU26830"/>
<dbReference type="PaxDb" id="224308-BSU26830"/>
<dbReference type="EnsemblBacteria" id="CAB14624">
    <property type="protein sequence ID" value="CAB14624"/>
    <property type="gene ID" value="BSU_26830"/>
</dbReference>
<dbReference type="GeneID" id="936254"/>
<dbReference type="KEGG" id="bsu:BSU26830"/>
<dbReference type="PATRIC" id="fig|224308.179.peg.2915"/>
<dbReference type="eggNOG" id="COG3443">
    <property type="taxonomic scope" value="Bacteria"/>
</dbReference>
<dbReference type="InParanoid" id="O05410"/>
<dbReference type="OrthoDB" id="9810636at2"/>
<dbReference type="PhylomeDB" id="O05410"/>
<dbReference type="BioCyc" id="BSUB:BSU26830-MONOMER"/>
<dbReference type="Proteomes" id="UP000001570">
    <property type="component" value="Chromosome"/>
</dbReference>
<dbReference type="GO" id="GO:0008270">
    <property type="term" value="F:zinc ion binding"/>
    <property type="evidence" value="ECO:0007669"/>
    <property type="project" value="InterPro"/>
</dbReference>
<dbReference type="Gene3D" id="2.40.128.20">
    <property type="match status" value="1"/>
</dbReference>
<dbReference type="InterPro" id="IPR012674">
    <property type="entry name" value="Calycin"/>
</dbReference>
<dbReference type="InterPro" id="IPR015304">
    <property type="entry name" value="ZinT_dom"/>
</dbReference>
<dbReference type="Pfam" id="PF09223">
    <property type="entry name" value="ZinT"/>
    <property type="match status" value="1"/>
</dbReference>
<dbReference type="SUPFAM" id="SSF50814">
    <property type="entry name" value="Lipocalins"/>
    <property type="match status" value="1"/>
</dbReference>
<dbReference type="PROSITE" id="PS51257">
    <property type="entry name" value="PROKAR_LIPOPROTEIN"/>
    <property type="match status" value="1"/>
</dbReference>
<organism>
    <name type="scientific">Bacillus subtilis (strain 168)</name>
    <dbReference type="NCBI Taxonomy" id="224308"/>
    <lineage>
        <taxon>Bacteria</taxon>
        <taxon>Bacillati</taxon>
        <taxon>Bacillota</taxon>
        <taxon>Bacilli</taxon>
        <taxon>Bacillales</taxon>
        <taxon>Bacillaceae</taxon>
        <taxon>Bacillus</taxon>
    </lineage>
</organism>
<evidence type="ECO:0000250" key="1"/>
<evidence type="ECO:0000255" key="2">
    <source>
        <dbReference type="PROSITE-ProRule" id="PRU00303"/>
    </source>
</evidence>
<evidence type="ECO:0000256" key="3">
    <source>
        <dbReference type="SAM" id="MobiDB-lite"/>
    </source>
</evidence>
<evidence type="ECO:0000305" key="4"/>
<feature type="signal peptide" evidence="2">
    <location>
        <begin position="1"/>
        <end position="30"/>
    </location>
</feature>
<feature type="chain" id="PRO_0000049882" description="Probable metal-binding protein YrpE">
    <location>
        <begin position="31"/>
        <end position="251"/>
    </location>
</feature>
<feature type="region of interest" description="Disordered" evidence="3">
    <location>
        <begin position="25"/>
        <end position="72"/>
    </location>
</feature>
<feature type="compositionally biased region" description="Polar residues" evidence="3">
    <location>
        <begin position="25"/>
        <end position="41"/>
    </location>
</feature>
<feature type="compositionally biased region" description="Basic and acidic residues" evidence="3">
    <location>
        <begin position="54"/>
        <end position="72"/>
    </location>
</feature>
<feature type="binding site" evidence="1">
    <location>
        <position position="203"/>
    </location>
    <ligand>
        <name>Zn(2+)</name>
        <dbReference type="ChEBI" id="CHEBI:29105"/>
        <label>1</label>
    </ligand>
</feature>
<feature type="binding site" evidence="1">
    <location>
        <position position="212"/>
    </location>
    <ligand>
        <name>Zn(2+)</name>
        <dbReference type="ChEBI" id="CHEBI:29105"/>
        <label>1</label>
    </ligand>
</feature>
<feature type="binding site" evidence="1">
    <location>
        <position position="212"/>
    </location>
    <ligand>
        <name>Zn(2+)</name>
        <dbReference type="ChEBI" id="CHEBI:29105"/>
        <label>2</label>
    </ligand>
</feature>
<feature type="binding site" evidence="1">
    <location>
        <position position="214"/>
    </location>
    <ligand>
        <name>Zn(2+)</name>
        <dbReference type="ChEBI" id="CHEBI:29105"/>
        <label>1</label>
    </ligand>
</feature>
<feature type="binding site" evidence="1">
    <location>
        <position position="247"/>
    </location>
    <ligand>
        <name>Zn(2+)</name>
        <dbReference type="ChEBI" id="CHEBI:29105"/>
        <label>2</label>
    </ligand>
</feature>
<feature type="binding site" evidence="1">
    <location>
        <position position="251"/>
    </location>
    <ligand>
        <name>Zn(2+)</name>
        <dbReference type="ChEBI" id="CHEBI:29105"/>
        <label>2</label>
    </ligand>
</feature>
<name>YRPE_BACSU</name>
<proteinExistence type="inferred from homology"/>
<protein>
    <recommendedName>
        <fullName>Probable metal-binding protein YrpE</fullName>
    </recommendedName>
</protein>
<reference key="1">
    <citation type="journal article" date="1997" name="Microbiology">
        <title>Sequence of the Bacillus subtilis genome region in the vicinity of the lev operon reveals two new extracytoplasmic function RNA polymerase sigma factors SigV and SigZ.</title>
        <authorList>
            <person name="Sorokin A."/>
            <person name="Bolotin A."/>
            <person name="Purnelle B."/>
            <person name="Hilbert H."/>
            <person name="Lauber J."/>
            <person name="Duesterhoeft A."/>
            <person name="Ehrlich S.D."/>
        </authorList>
    </citation>
    <scope>NUCLEOTIDE SEQUENCE [GENOMIC DNA]</scope>
    <source>
        <strain>168</strain>
    </source>
</reference>
<reference key="2">
    <citation type="journal article" date="1997" name="Nature">
        <title>The complete genome sequence of the Gram-positive bacterium Bacillus subtilis.</title>
        <authorList>
            <person name="Kunst F."/>
            <person name="Ogasawara N."/>
            <person name="Moszer I."/>
            <person name="Albertini A.M."/>
            <person name="Alloni G."/>
            <person name="Azevedo V."/>
            <person name="Bertero M.G."/>
            <person name="Bessieres P."/>
            <person name="Bolotin A."/>
            <person name="Borchert S."/>
            <person name="Borriss R."/>
            <person name="Boursier L."/>
            <person name="Brans A."/>
            <person name="Braun M."/>
            <person name="Brignell S.C."/>
            <person name="Bron S."/>
            <person name="Brouillet S."/>
            <person name="Bruschi C.V."/>
            <person name="Caldwell B."/>
            <person name="Capuano V."/>
            <person name="Carter N.M."/>
            <person name="Choi S.-K."/>
            <person name="Codani J.-J."/>
            <person name="Connerton I.F."/>
            <person name="Cummings N.J."/>
            <person name="Daniel R.A."/>
            <person name="Denizot F."/>
            <person name="Devine K.M."/>
            <person name="Duesterhoeft A."/>
            <person name="Ehrlich S.D."/>
            <person name="Emmerson P.T."/>
            <person name="Entian K.-D."/>
            <person name="Errington J."/>
            <person name="Fabret C."/>
            <person name="Ferrari E."/>
            <person name="Foulger D."/>
            <person name="Fritz C."/>
            <person name="Fujita M."/>
            <person name="Fujita Y."/>
            <person name="Fuma S."/>
            <person name="Galizzi A."/>
            <person name="Galleron N."/>
            <person name="Ghim S.-Y."/>
            <person name="Glaser P."/>
            <person name="Goffeau A."/>
            <person name="Golightly E.J."/>
            <person name="Grandi G."/>
            <person name="Guiseppi G."/>
            <person name="Guy B.J."/>
            <person name="Haga K."/>
            <person name="Haiech J."/>
            <person name="Harwood C.R."/>
            <person name="Henaut A."/>
            <person name="Hilbert H."/>
            <person name="Holsappel S."/>
            <person name="Hosono S."/>
            <person name="Hullo M.-F."/>
            <person name="Itaya M."/>
            <person name="Jones L.-M."/>
            <person name="Joris B."/>
            <person name="Karamata D."/>
            <person name="Kasahara Y."/>
            <person name="Klaerr-Blanchard M."/>
            <person name="Klein C."/>
            <person name="Kobayashi Y."/>
            <person name="Koetter P."/>
            <person name="Koningstein G."/>
            <person name="Krogh S."/>
            <person name="Kumano M."/>
            <person name="Kurita K."/>
            <person name="Lapidus A."/>
            <person name="Lardinois S."/>
            <person name="Lauber J."/>
            <person name="Lazarevic V."/>
            <person name="Lee S.-M."/>
            <person name="Levine A."/>
            <person name="Liu H."/>
            <person name="Masuda S."/>
            <person name="Mauel C."/>
            <person name="Medigue C."/>
            <person name="Medina N."/>
            <person name="Mellado R.P."/>
            <person name="Mizuno M."/>
            <person name="Moestl D."/>
            <person name="Nakai S."/>
            <person name="Noback M."/>
            <person name="Noone D."/>
            <person name="O'Reilly M."/>
            <person name="Ogawa K."/>
            <person name="Ogiwara A."/>
            <person name="Oudega B."/>
            <person name="Park S.-H."/>
            <person name="Parro V."/>
            <person name="Pohl T.M."/>
            <person name="Portetelle D."/>
            <person name="Porwollik S."/>
            <person name="Prescott A.M."/>
            <person name="Presecan E."/>
            <person name="Pujic P."/>
            <person name="Purnelle B."/>
            <person name="Rapoport G."/>
            <person name="Rey M."/>
            <person name="Reynolds S."/>
            <person name="Rieger M."/>
            <person name="Rivolta C."/>
            <person name="Rocha E."/>
            <person name="Roche B."/>
            <person name="Rose M."/>
            <person name="Sadaie Y."/>
            <person name="Sato T."/>
            <person name="Scanlan E."/>
            <person name="Schleich S."/>
            <person name="Schroeter R."/>
            <person name="Scoffone F."/>
            <person name="Sekiguchi J."/>
            <person name="Sekowska A."/>
            <person name="Seror S.J."/>
            <person name="Serror P."/>
            <person name="Shin B.-S."/>
            <person name="Soldo B."/>
            <person name="Sorokin A."/>
            <person name="Tacconi E."/>
            <person name="Takagi T."/>
            <person name="Takahashi H."/>
            <person name="Takemaru K."/>
            <person name="Takeuchi M."/>
            <person name="Tamakoshi A."/>
            <person name="Tanaka T."/>
            <person name="Terpstra P."/>
            <person name="Tognoni A."/>
            <person name="Tosato V."/>
            <person name="Uchiyama S."/>
            <person name="Vandenbol M."/>
            <person name="Vannier F."/>
            <person name="Vassarotti A."/>
            <person name="Viari A."/>
            <person name="Wambutt R."/>
            <person name="Wedler E."/>
            <person name="Wedler H."/>
            <person name="Weitzenegger T."/>
            <person name="Winters P."/>
            <person name="Wipat A."/>
            <person name="Yamamoto H."/>
            <person name="Yamane K."/>
            <person name="Yasumoto K."/>
            <person name="Yata K."/>
            <person name="Yoshida K."/>
            <person name="Yoshikawa H.-F."/>
            <person name="Zumstein E."/>
            <person name="Yoshikawa H."/>
            <person name="Danchin A."/>
        </authorList>
    </citation>
    <scope>NUCLEOTIDE SEQUENCE [LARGE SCALE GENOMIC DNA]</scope>
    <source>
        <strain>168</strain>
    </source>
</reference>
<comment type="similarity">
    <text evidence="4">Belongs to the calycin superfamily. ZinT family.</text>
</comment>